<protein>
    <recommendedName>
        <fullName>NADH-ubiquinone oxidoreductase chain 3</fullName>
        <ecNumber>7.1.1.2</ecNumber>
    </recommendedName>
    <alternativeName>
        <fullName>NADH dehydrogenase subunit 3</fullName>
    </alternativeName>
</protein>
<sequence>MNLISTVILIASALSLILILVSFWLPQLSPDYEKLSPYECGFDPLGSARLPFSLRFFLIAILFLLFDLEIALLLPLPWGDQLSNPTLTFMWATSVLALLTLGLIYEWLQGGLEWAE</sequence>
<feature type="chain" id="PRO_0000117745" description="NADH-ubiquinone oxidoreductase chain 3">
    <location>
        <begin position="1"/>
        <end position="116"/>
    </location>
</feature>
<feature type="transmembrane region" description="Helical" evidence="2">
    <location>
        <begin position="3"/>
        <end position="23"/>
    </location>
</feature>
<feature type="transmembrane region" description="Helical" evidence="2">
    <location>
        <begin position="56"/>
        <end position="76"/>
    </location>
</feature>
<feature type="transmembrane region" description="Helical" evidence="2">
    <location>
        <begin position="87"/>
        <end position="107"/>
    </location>
</feature>
<gene>
    <name type="primary">MT-ND3</name>
    <name type="synonym">MTND3</name>
    <name type="synonym">NADH3</name>
    <name type="synonym">ND3</name>
</gene>
<organism>
    <name type="scientific">Gadus morhua</name>
    <name type="common">Atlantic cod</name>
    <dbReference type="NCBI Taxonomy" id="8049"/>
    <lineage>
        <taxon>Eukaryota</taxon>
        <taxon>Metazoa</taxon>
        <taxon>Chordata</taxon>
        <taxon>Craniata</taxon>
        <taxon>Vertebrata</taxon>
        <taxon>Euteleostomi</taxon>
        <taxon>Actinopterygii</taxon>
        <taxon>Neopterygii</taxon>
        <taxon>Teleostei</taxon>
        <taxon>Neoteleostei</taxon>
        <taxon>Acanthomorphata</taxon>
        <taxon>Zeiogadaria</taxon>
        <taxon>Gadariae</taxon>
        <taxon>Gadiformes</taxon>
        <taxon>Gadoidei</taxon>
        <taxon>Gadidae</taxon>
        <taxon>Gadus</taxon>
    </lineage>
</organism>
<reference key="1">
    <citation type="journal article" date="1990" name="Nucleic Acids Res.">
        <title>Organization of the mitochondrial genome of Atlantic cod, Gadus morhua.</title>
        <authorList>
            <person name="Johansen S."/>
            <person name="Guddal P.H."/>
            <person name="Johansen T."/>
        </authorList>
    </citation>
    <scope>NUCLEOTIDE SEQUENCE [GENOMIC DNA]</scope>
    <source>
        <strain>Norwegian coastal 1</strain>
        <tissue>Liver</tissue>
    </source>
</reference>
<reference key="2">
    <citation type="journal article" date="1996" name="Mol. Mar. Biol. Biotechnol.">
        <title>The complete mitochondrial DNA sequence of Atlantic cod (Gadus morhua): relevance to taxonomic studies among codfishes.</title>
        <authorList>
            <person name="Johansen S."/>
            <person name="Bakke I."/>
        </authorList>
    </citation>
    <scope>NUCLEOTIDE SEQUENCE [GENOMIC DNA]</scope>
    <source>
        <strain>Norwegian coastal 1</strain>
    </source>
</reference>
<keyword id="KW-0249">Electron transport</keyword>
<keyword id="KW-0472">Membrane</keyword>
<keyword id="KW-0496">Mitochondrion</keyword>
<keyword id="KW-0520">NAD</keyword>
<keyword id="KW-1185">Reference proteome</keyword>
<keyword id="KW-0679">Respiratory chain</keyword>
<keyword id="KW-1278">Translocase</keyword>
<keyword id="KW-0812">Transmembrane</keyword>
<keyword id="KW-1133">Transmembrane helix</keyword>
<keyword id="KW-0813">Transport</keyword>
<keyword id="KW-0830">Ubiquinone</keyword>
<name>NU3M_GADMO</name>
<proteinExistence type="inferred from homology"/>
<comment type="function">
    <text evidence="1">Core subunit of the mitochondrial membrane respiratory chain NADH dehydrogenase (Complex I) that is believed to belong to the minimal assembly required for catalysis. Complex I functions in the transfer of electrons from NADH to the respiratory chain. The immediate electron acceptor for the enzyme is believed to be ubiquinone (By similarity).</text>
</comment>
<comment type="catalytic activity">
    <reaction>
        <text>a ubiquinone + NADH + 5 H(+)(in) = a ubiquinol + NAD(+) + 4 H(+)(out)</text>
        <dbReference type="Rhea" id="RHEA:29091"/>
        <dbReference type="Rhea" id="RHEA-COMP:9565"/>
        <dbReference type="Rhea" id="RHEA-COMP:9566"/>
        <dbReference type="ChEBI" id="CHEBI:15378"/>
        <dbReference type="ChEBI" id="CHEBI:16389"/>
        <dbReference type="ChEBI" id="CHEBI:17976"/>
        <dbReference type="ChEBI" id="CHEBI:57540"/>
        <dbReference type="ChEBI" id="CHEBI:57945"/>
        <dbReference type="EC" id="7.1.1.2"/>
    </reaction>
</comment>
<comment type="subcellular location">
    <subcellularLocation>
        <location evidence="1">Mitochondrion membrane</location>
        <topology evidence="1">Multi-pass membrane protein</topology>
    </subcellularLocation>
</comment>
<comment type="similarity">
    <text evidence="3">Belongs to the complex I subunit 3 family.</text>
</comment>
<accession>P15957</accession>
<geneLocation type="mitochondrion"/>
<evidence type="ECO:0000250" key="1"/>
<evidence type="ECO:0000255" key="2"/>
<evidence type="ECO:0000305" key="3"/>
<dbReference type="EC" id="7.1.1.2"/>
<dbReference type="EMBL" id="X17661">
    <property type="protein sequence ID" value="CAA35657.1"/>
    <property type="molecule type" value="Genomic_DNA"/>
</dbReference>
<dbReference type="EMBL" id="X99772">
    <property type="protein sequence ID" value="CAA68113.1"/>
    <property type="molecule type" value="Genomic_DNA"/>
</dbReference>
<dbReference type="PIR" id="S08425">
    <property type="entry name" value="S08425"/>
</dbReference>
<dbReference type="RefSeq" id="NP_008620.1">
    <property type="nucleotide sequence ID" value="NC_002081.1"/>
</dbReference>
<dbReference type="SMR" id="P15957"/>
<dbReference type="GeneID" id="808452"/>
<dbReference type="CTD" id="4537"/>
<dbReference type="OrthoDB" id="154075at2759"/>
<dbReference type="Proteomes" id="UP000694546">
    <property type="component" value="Unplaced"/>
</dbReference>
<dbReference type="GO" id="GO:0031966">
    <property type="term" value="C:mitochondrial membrane"/>
    <property type="evidence" value="ECO:0007669"/>
    <property type="project" value="UniProtKB-SubCell"/>
</dbReference>
<dbReference type="GO" id="GO:0030964">
    <property type="term" value="C:NADH dehydrogenase complex"/>
    <property type="evidence" value="ECO:0007669"/>
    <property type="project" value="TreeGrafter"/>
</dbReference>
<dbReference type="GO" id="GO:0008137">
    <property type="term" value="F:NADH dehydrogenase (ubiquinone) activity"/>
    <property type="evidence" value="ECO:0007669"/>
    <property type="project" value="UniProtKB-EC"/>
</dbReference>
<dbReference type="FunFam" id="1.20.58.1610:FF:000004">
    <property type="entry name" value="NADH-quinone oxidoreductase subunit A"/>
    <property type="match status" value="1"/>
</dbReference>
<dbReference type="Gene3D" id="1.20.58.1610">
    <property type="entry name" value="NADH:ubiquinone/plastoquinone oxidoreductase, chain 3"/>
    <property type="match status" value="1"/>
</dbReference>
<dbReference type="InterPro" id="IPR000440">
    <property type="entry name" value="NADH_UbQ/plastoQ_OxRdtase_su3"/>
</dbReference>
<dbReference type="InterPro" id="IPR038430">
    <property type="entry name" value="NDAH_ubi_oxred_su3_sf"/>
</dbReference>
<dbReference type="PANTHER" id="PTHR11058">
    <property type="entry name" value="NADH-UBIQUINONE OXIDOREDUCTASE CHAIN 3"/>
    <property type="match status" value="1"/>
</dbReference>
<dbReference type="PANTHER" id="PTHR11058:SF9">
    <property type="entry name" value="NADH-UBIQUINONE OXIDOREDUCTASE CHAIN 3"/>
    <property type="match status" value="1"/>
</dbReference>
<dbReference type="Pfam" id="PF00507">
    <property type="entry name" value="Oxidored_q4"/>
    <property type="match status" value="1"/>
</dbReference>